<name>HSLO_THEVB</name>
<proteinExistence type="inferred from homology"/>
<protein>
    <recommendedName>
        <fullName evidence="1">33 kDa chaperonin</fullName>
    </recommendedName>
    <alternativeName>
        <fullName evidence="1">Heat shock protein 33 homolog</fullName>
        <shortName evidence="1">HSP33</shortName>
    </alternativeName>
</protein>
<keyword id="KW-0143">Chaperone</keyword>
<keyword id="KW-0963">Cytoplasm</keyword>
<keyword id="KW-1015">Disulfide bond</keyword>
<keyword id="KW-0676">Redox-active center</keyword>
<keyword id="KW-1185">Reference proteome</keyword>
<keyword id="KW-0862">Zinc</keyword>
<evidence type="ECO:0000255" key="1">
    <source>
        <dbReference type="HAMAP-Rule" id="MF_00117"/>
    </source>
</evidence>
<reference key="1">
    <citation type="journal article" date="2002" name="DNA Res.">
        <title>Complete genome structure of the thermophilic cyanobacterium Thermosynechococcus elongatus BP-1.</title>
        <authorList>
            <person name="Nakamura Y."/>
            <person name="Kaneko T."/>
            <person name="Sato S."/>
            <person name="Ikeuchi M."/>
            <person name="Katoh H."/>
            <person name="Sasamoto S."/>
            <person name="Watanabe A."/>
            <person name="Iriguchi M."/>
            <person name="Kawashima K."/>
            <person name="Kimura T."/>
            <person name="Kishida Y."/>
            <person name="Kiyokawa C."/>
            <person name="Kohara M."/>
            <person name="Matsumoto M."/>
            <person name="Matsuno A."/>
            <person name="Nakazaki N."/>
            <person name="Shimpo S."/>
            <person name="Sugimoto M."/>
            <person name="Takeuchi C."/>
            <person name="Yamada M."/>
            <person name="Tabata S."/>
        </authorList>
    </citation>
    <scope>NUCLEOTIDE SEQUENCE [LARGE SCALE GENOMIC DNA]</scope>
    <source>
        <strain>NIES-2133 / IAM M-273 / BP-1</strain>
    </source>
</reference>
<comment type="function">
    <text evidence="1">Redox regulated molecular chaperone. Protects both thermally unfolding and oxidatively damaged proteins from irreversible aggregation. Plays an important role in the bacterial defense system toward oxidative stress.</text>
</comment>
<comment type="subcellular location">
    <subcellularLocation>
        <location evidence="1">Cytoplasm</location>
    </subcellularLocation>
</comment>
<comment type="PTM">
    <text evidence="1">Under oxidizing conditions two disulfide bonds are formed involving the reactive cysteines. Under reducing conditions zinc is bound to the reactive cysteines and the protein is inactive.</text>
</comment>
<comment type="similarity">
    <text evidence="1">Belongs to the HSP33 family.</text>
</comment>
<dbReference type="EMBL" id="BA000039">
    <property type="protein sequence ID" value="BAC08359.1"/>
    <property type="molecule type" value="Genomic_DNA"/>
</dbReference>
<dbReference type="RefSeq" id="NP_681597.1">
    <property type="nucleotide sequence ID" value="NC_004113.1"/>
</dbReference>
<dbReference type="RefSeq" id="WP_011056651.1">
    <property type="nucleotide sequence ID" value="NC_004113.1"/>
</dbReference>
<dbReference type="SMR" id="Q8DKQ1"/>
<dbReference type="STRING" id="197221.gene:10747399"/>
<dbReference type="EnsemblBacteria" id="BAC08359">
    <property type="protein sequence ID" value="BAC08359"/>
    <property type="gene ID" value="BAC08359"/>
</dbReference>
<dbReference type="KEGG" id="tel:tll0808"/>
<dbReference type="PATRIC" id="fig|197221.4.peg.849"/>
<dbReference type="eggNOG" id="COG1281">
    <property type="taxonomic scope" value="Bacteria"/>
</dbReference>
<dbReference type="Proteomes" id="UP000000440">
    <property type="component" value="Chromosome"/>
</dbReference>
<dbReference type="GO" id="GO:0005737">
    <property type="term" value="C:cytoplasm"/>
    <property type="evidence" value="ECO:0007669"/>
    <property type="project" value="UniProtKB-SubCell"/>
</dbReference>
<dbReference type="GO" id="GO:0044183">
    <property type="term" value="F:protein folding chaperone"/>
    <property type="evidence" value="ECO:0007669"/>
    <property type="project" value="TreeGrafter"/>
</dbReference>
<dbReference type="GO" id="GO:0051082">
    <property type="term" value="F:unfolded protein binding"/>
    <property type="evidence" value="ECO:0007669"/>
    <property type="project" value="UniProtKB-UniRule"/>
</dbReference>
<dbReference type="GO" id="GO:0042026">
    <property type="term" value="P:protein refolding"/>
    <property type="evidence" value="ECO:0007669"/>
    <property type="project" value="TreeGrafter"/>
</dbReference>
<dbReference type="CDD" id="cd00498">
    <property type="entry name" value="Hsp33"/>
    <property type="match status" value="1"/>
</dbReference>
<dbReference type="Gene3D" id="3.55.30.10">
    <property type="entry name" value="Hsp33 domain"/>
    <property type="match status" value="1"/>
</dbReference>
<dbReference type="Gene3D" id="3.90.1280.10">
    <property type="entry name" value="HSP33 redox switch-like"/>
    <property type="match status" value="1"/>
</dbReference>
<dbReference type="HAMAP" id="MF_00117">
    <property type="entry name" value="HslO"/>
    <property type="match status" value="1"/>
</dbReference>
<dbReference type="InterPro" id="IPR000397">
    <property type="entry name" value="Heat_shock_Hsp33"/>
</dbReference>
<dbReference type="InterPro" id="IPR016154">
    <property type="entry name" value="Heat_shock_Hsp33_C"/>
</dbReference>
<dbReference type="InterPro" id="IPR016153">
    <property type="entry name" value="Heat_shock_Hsp33_N"/>
</dbReference>
<dbReference type="NCBIfam" id="NF001033">
    <property type="entry name" value="PRK00114.1"/>
    <property type="match status" value="1"/>
</dbReference>
<dbReference type="PANTHER" id="PTHR30111">
    <property type="entry name" value="33 KDA CHAPERONIN"/>
    <property type="match status" value="1"/>
</dbReference>
<dbReference type="PANTHER" id="PTHR30111:SF1">
    <property type="entry name" value="33 KDA CHAPERONIN"/>
    <property type="match status" value="1"/>
</dbReference>
<dbReference type="Pfam" id="PF01430">
    <property type="entry name" value="HSP33"/>
    <property type="match status" value="1"/>
</dbReference>
<dbReference type="PIRSF" id="PIRSF005261">
    <property type="entry name" value="Heat_shock_Hsp33"/>
    <property type="match status" value="1"/>
</dbReference>
<dbReference type="SUPFAM" id="SSF64397">
    <property type="entry name" value="Hsp33 domain"/>
    <property type="match status" value="1"/>
</dbReference>
<dbReference type="SUPFAM" id="SSF118352">
    <property type="entry name" value="HSP33 redox switch-like"/>
    <property type="match status" value="1"/>
</dbReference>
<accession>Q8DKQ1</accession>
<sequence length="299" mass="32067">MADFLLRATAAAEGIRAVGVITTQLTDEARKRHQLSYVATAALGRTMAAGLILASSFKQPQARVNVRIQGNGPLGTIFADAGADGTVRGYVQYPSVELPPNAKGKLDVGAAVGHQGYLYVIHDLGYGYPYSSTVELVSGEIAEDITYYLATSEQTPSALMLGVFVEESGVTAAGGLMLQVLPKAANDEHLIATLEQRVANLKGFTPLLQAGRTLPDIFQELLGDMDLQILPQRQMVRFHCGCSHERMLAALKLLGEAELRDILATEAKAEATCQFCNAVYWADQPMLEQLIAELATASV</sequence>
<gene>
    <name evidence="1" type="primary">hslO</name>
    <name type="synonym">hsp33</name>
    <name type="ordered locus">tll0808</name>
</gene>
<feature type="chain" id="PRO_0000192217" description="33 kDa chaperonin">
    <location>
        <begin position="1"/>
        <end position="299"/>
    </location>
</feature>
<feature type="disulfide bond" description="Redox-active" evidence="1">
    <location>
        <begin position="240"/>
        <end position="242"/>
    </location>
</feature>
<feature type="disulfide bond" description="Redox-active" evidence="1">
    <location>
        <begin position="273"/>
        <end position="276"/>
    </location>
</feature>
<organism>
    <name type="scientific">Thermosynechococcus vestitus (strain NIES-2133 / IAM M-273 / BP-1)</name>
    <dbReference type="NCBI Taxonomy" id="197221"/>
    <lineage>
        <taxon>Bacteria</taxon>
        <taxon>Bacillati</taxon>
        <taxon>Cyanobacteriota</taxon>
        <taxon>Cyanophyceae</taxon>
        <taxon>Acaryochloridales</taxon>
        <taxon>Thermosynechococcaceae</taxon>
        <taxon>Thermosynechococcus</taxon>
    </lineage>
</organism>